<comment type="function">
    <text evidence="2">Negatively regulates the canonical Wnt signaling in breast cancer cells. Exerts an inhibitory effect on breast cancer growth by inhibiting CTNNB1 stabilization and nucleus translocation, which reduces the activity of Wnt targets (PubMed:29367600).</text>
</comment>
<comment type="subunit">
    <text evidence="2">Interacts with CTNNB1 (PubMed:29367600).</text>
</comment>
<comment type="subcellular location">
    <subcellularLocation>
        <location evidence="2">Cell membrane</location>
        <topology evidence="1">Multi-pass membrane protein</topology>
    </subcellularLocation>
</comment>
<comment type="tissue specificity">
    <text evidence="2">Expressed in normal breast tissues. Down-regulated in breast cancer cells (at protein level) (PubMed:29367600).</text>
</comment>
<comment type="similarity">
    <text evidence="3">Belongs to the TMEM170 family.</text>
</comment>
<gene>
    <name type="primary">TMEM170B</name>
</gene>
<dbReference type="EMBL" id="AL357518">
    <property type="status" value="NOT_ANNOTATED_CDS"/>
    <property type="molecule type" value="Genomic_DNA"/>
</dbReference>
<dbReference type="CCDS" id="CCDS43425.1"/>
<dbReference type="RefSeq" id="NP_001094299.1">
    <property type="nucleotide sequence ID" value="NM_001100829.3"/>
</dbReference>
<dbReference type="SMR" id="Q5T4T1"/>
<dbReference type="FunCoup" id="Q5T4T1">
    <property type="interactions" value="528"/>
</dbReference>
<dbReference type="STRING" id="9606.ENSP00000368737"/>
<dbReference type="GlyCosmos" id="Q5T4T1">
    <property type="glycosylation" value="1 site, No reported glycans"/>
</dbReference>
<dbReference type="GlyGen" id="Q5T4T1">
    <property type="glycosylation" value="1 site"/>
</dbReference>
<dbReference type="iPTMnet" id="Q5T4T1"/>
<dbReference type="PhosphoSitePlus" id="Q5T4T1"/>
<dbReference type="BioMuta" id="TMEM170B"/>
<dbReference type="DMDM" id="74744982"/>
<dbReference type="PaxDb" id="9606-ENSP00000368737"/>
<dbReference type="Antibodypedia" id="71126">
    <property type="antibodies" value="5 antibodies from 5 providers"/>
</dbReference>
<dbReference type="DNASU" id="100113407"/>
<dbReference type="Ensembl" id="ENST00000379426.2">
    <property type="protein sequence ID" value="ENSP00000368737.1"/>
    <property type="gene ID" value="ENSG00000205269.6"/>
</dbReference>
<dbReference type="GeneID" id="100113407"/>
<dbReference type="KEGG" id="hsa:100113407"/>
<dbReference type="MANE-Select" id="ENST00000379426.2">
    <property type="protein sequence ID" value="ENSP00000368737.1"/>
    <property type="RefSeq nucleotide sequence ID" value="NM_001100829.3"/>
    <property type="RefSeq protein sequence ID" value="NP_001094299.1"/>
</dbReference>
<dbReference type="UCSC" id="uc010jpa.5">
    <property type="organism name" value="human"/>
</dbReference>
<dbReference type="AGR" id="HGNC:34244"/>
<dbReference type="CTD" id="100113407"/>
<dbReference type="DisGeNET" id="100113407"/>
<dbReference type="GeneCards" id="TMEM170B"/>
<dbReference type="HGNC" id="HGNC:34244">
    <property type="gene designation" value="TMEM170B"/>
</dbReference>
<dbReference type="HPA" id="ENSG00000205269">
    <property type="expression patterns" value="Tissue enhanced (bone)"/>
</dbReference>
<dbReference type="neXtProt" id="NX_Q5T4T1"/>
<dbReference type="OpenTargets" id="ENSG00000205269"/>
<dbReference type="PharmGKB" id="PA162405923"/>
<dbReference type="VEuPathDB" id="HostDB:ENSG00000205269"/>
<dbReference type="eggNOG" id="KOG4349">
    <property type="taxonomic scope" value="Eukaryota"/>
</dbReference>
<dbReference type="GeneTree" id="ENSGT00940000160424"/>
<dbReference type="HOGENOM" id="CLU_149050_0_0_1"/>
<dbReference type="InParanoid" id="Q5T4T1"/>
<dbReference type="OMA" id="DHMINLS"/>
<dbReference type="OrthoDB" id="13807at2759"/>
<dbReference type="PAN-GO" id="Q5T4T1">
    <property type="GO annotations" value="2 GO annotations based on evolutionary models"/>
</dbReference>
<dbReference type="PhylomeDB" id="Q5T4T1"/>
<dbReference type="TreeFam" id="TF314615"/>
<dbReference type="PathwayCommons" id="Q5T4T1"/>
<dbReference type="SignaLink" id="Q5T4T1"/>
<dbReference type="BioGRID-ORCS" id="100113407">
    <property type="hits" value="35 hits in 1148 CRISPR screens"/>
</dbReference>
<dbReference type="Pharos" id="Q5T4T1">
    <property type="development level" value="Tdark"/>
</dbReference>
<dbReference type="PRO" id="PR:Q5T4T1"/>
<dbReference type="Proteomes" id="UP000005640">
    <property type="component" value="Chromosome 6"/>
</dbReference>
<dbReference type="RNAct" id="Q5T4T1">
    <property type="molecule type" value="protein"/>
</dbReference>
<dbReference type="Bgee" id="ENSG00000205269">
    <property type="expression patterns" value="Expressed in Brodmann (1909) area 23 and 168 other cell types or tissues"/>
</dbReference>
<dbReference type="GO" id="GO:0005886">
    <property type="term" value="C:plasma membrane"/>
    <property type="evidence" value="ECO:0000314"/>
    <property type="project" value="UniProtKB"/>
</dbReference>
<dbReference type="GO" id="GO:0090090">
    <property type="term" value="P:negative regulation of canonical Wnt signaling pathway"/>
    <property type="evidence" value="ECO:0000315"/>
    <property type="project" value="UniProtKB"/>
</dbReference>
<dbReference type="GO" id="GO:0016055">
    <property type="term" value="P:Wnt signaling pathway"/>
    <property type="evidence" value="ECO:0007669"/>
    <property type="project" value="UniProtKB-KW"/>
</dbReference>
<dbReference type="InterPro" id="IPR019334">
    <property type="entry name" value="Transmembrane_pr_170"/>
</dbReference>
<dbReference type="PANTHER" id="PTHR22779">
    <property type="entry name" value="SD17342P"/>
    <property type="match status" value="1"/>
</dbReference>
<dbReference type="PANTHER" id="PTHR22779:SF4">
    <property type="entry name" value="TRANSMEMBRANE PROTEIN 170B"/>
    <property type="match status" value="1"/>
</dbReference>
<dbReference type="Pfam" id="PF10190">
    <property type="entry name" value="Tmemb_170"/>
    <property type="match status" value="1"/>
</dbReference>
<name>T170B_HUMAN</name>
<feature type="chain" id="PRO_0000342267" description="Transmembrane protein 170B">
    <location>
        <begin position="1"/>
        <end position="132"/>
    </location>
</feature>
<feature type="topological domain" description="Extracellular" evidence="1">
    <location>
        <begin position="1"/>
        <end position="37"/>
    </location>
</feature>
<feature type="transmembrane region" description="Helical" evidence="1">
    <location>
        <begin position="38"/>
        <end position="58"/>
    </location>
</feature>
<feature type="topological domain" description="Cytoplasmic" evidence="1">
    <location>
        <begin position="59"/>
        <end position="68"/>
    </location>
</feature>
<feature type="transmembrane region" description="Helical" evidence="1">
    <location>
        <begin position="69"/>
        <end position="89"/>
    </location>
</feature>
<feature type="topological domain" description="Extracellular" evidence="1">
    <location>
        <begin position="90"/>
        <end position="104"/>
    </location>
</feature>
<feature type="transmembrane region" description="Helical" evidence="1">
    <location>
        <begin position="105"/>
        <end position="125"/>
    </location>
</feature>
<feature type="topological domain" description="Cytoplasmic" evidence="1">
    <location>
        <begin position="126"/>
        <end position="132"/>
    </location>
</feature>
<feature type="glycosylation site" description="N-linked (GlcNAc...) asparagine" evidence="1">
    <location>
        <position position="12"/>
    </location>
</feature>
<protein>
    <recommendedName>
        <fullName>Transmembrane protein 170B</fullName>
    </recommendedName>
</protein>
<evidence type="ECO:0000255" key="1"/>
<evidence type="ECO:0000269" key="2">
    <source>
    </source>
</evidence>
<evidence type="ECO:0000305" key="3"/>
<accession>Q5T4T1</accession>
<sequence length="132" mass="14360">MKAEGGDHSMINLSVQQVLSLWAHGTVLRNLTEMWYWIFLWALFSSLFVHGAAGVLMFVMLQRHRQGRVISVIAVSIGFLASVTGAMITSAAVAGIYRVAGKNMAPLEALVWGVGQTVLTLIISFSRILATL</sequence>
<organism>
    <name type="scientific">Homo sapiens</name>
    <name type="common">Human</name>
    <dbReference type="NCBI Taxonomy" id="9606"/>
    <lineage>
        <taxon>Eukaryota</taxon>
        <taxon>Metazoa</taxon>
        <taxon>Chordata</taxon>
        <taxon>Craniata</taxon>
        <taxon>Vertebrata</taxon>
        <taxon>Euteleostomi</taxon>
        <taxon>Mammalia</taxon>
        <taxon>Eutheria</taxon>
        <taxon>Euarchontoglires</taxon>
        <taxon>Primates</taxon>
        <taxon>Haplorrhini</taxon>
        <taxon>Catarrhini</taxon>
        <taxon>Hominidae</taxon>
        <taxon>Homo</taxon>
    </lineage>
</organism>
<keyword id="KW-1003">Cell membrane</keyword>
<keyword id="KW-0325">Glycoprotein</keyword>
<keyword id="KW-0472">Membrane</keyword>
<keyword id="KW-1185">Reference proteome</keyword>
<keyword id="KW-0812">Transmembrane</keyword>
<keyword id="KW-1133">Transmembrane helix</keyword>
<keyword id="KW-0879">Wnt signaling pathway</keyword>
<proteinExistence type="evidence at protein level"/>
<reference key="1">
    <citation type="journal article" date="2003" name="Nature">
        <title>The DNA sequence and analysis of human chromosome 6.</title>
        <authorList>
            <person name="Mungall A.J."/>
            <person name="Palmer S.A."/>
            <person name="Sims S.K."/>
            <person name="Edwards C.A."/>
            <person name="Ashurst J.L."/>
            <person name="Wilming L."/>
            <person name="Jones M.C."/>
            <person name="Horton R."/>
            <person name="Hunt S.E."/>
            <person name="Scott C.E."/>
            <person name="Gilbert J.G.R."/>
            <person name="Clamp M.E."/>
            <person name="Bethel G."/>
            <person name="Milne S."/>
            <person name="Ainscough R."/>
            <person name="Almeida J.P."/>
            <person name="Ambrose K.D."/>
            <person name="Andrews T.D."/>
            <person name="Ashwell R.I.S."/>
            <person name="Babbage A.K."/>
            <person name="Bagguley C.L."/>
            <person name="Bailey J."/>
            <person name="Banerjee R."/>
            <person name="Barker D.J."/>
            <person name="Barlow K.F."/>
            <person name="Bates K."/>
            <person name="Beare D.M."/>
            <person name="Beasley H."/>
            <person name="Beasley O."/>
            <person name="Bird C.P."/>
            <person name="Blakey S.E."/>
            <person name="Bray-Allen S."/>
            <person name="Brook J."/>
            <person name="Brown A.J."/>
            <person name="Brown J.Y."/>
            <person name="Burford D.C."/>
            <person name="Burrill W."/>
            <person name="Burton J."/>
            <person name="Carder C."/>
            <person name="Carter N.P."/>
            <person name="Chapman J.C."/>
            <person name="Clark S.Y."/>
            <person name="Clark G."/>
            <person name="Clee C.M."/>
            <person name="Clegg S."/>
            <person name="Cobley V."/>
            <person name="Collier R.E."/>
            <person name="Collins J.E."/>
            <person name="Colman L.K."/>
            <person name="Corby N.R."/>
            <person name="Coville G.J."/>
            <person name="Culley K.M."/>
            <person name="Dhami P."/>
            <person name="Davies J."/>
            <person name="Dunn M."/>
            <person name="Earthrowl M.E."/>
            <person name="Ellington A.E."/>
            <person name="Evans K.A."/>
            <person name="Faulkner L."/>
            <person name="Francis M.D."/>
            <person name="Frankish A."/>
            <person name="Frankland J."/>
            <person name="French L."/>
            <person name="Garner P."/>
            <person name="Garnett J."/>
            <person name="Ghori M.J."/>
            <person name="Gilby L.M."/>
            <person name="Gillson C.J."/>
            <person name="Glithero R.J."/>
            <person name="Grafham D.V."/>
            <person name="Grant M."/>
            <person name="Gribble S."/>
            <person name="Griffiths C."/>
            <person name="Griffiths M.N.D."/>
            <person name="Hall R."/>
            <person name="Halls K.S."/>
            <person name="Hammond S."/>
            <person name="Harley J.L."/>
            <person name="Hart E.A."/>
            <person name="Heath P.D."/>
            <person name="Heathcott R."/>
            <person name="Holmes S.J."/>
            <person name="Howden P.J."/>
            <person name="Howe K.L."/>
            <person name="Howell G.R."/>
            <person name="Huckle E."/>
            <person name="Humphray S.J."/>
            <person name="Humphries M.D."/>
            <person name="Hunt A.R."/>
            <person name="Johnson C.M."/>
            <person name="Joy A.A."/>
            <person name="Kay M."/>
            <person name="Keenan S.J."/>
            <person name="Kimberley A.M."/>
            <person name="King A."/>
            <person name="Laird G.K."/>
            <person name="Langford C."/>
            <person name="Lawlor S."/>
            <person name="Leongamornlert D.A."/>
            <person name="Leversha M."/>
            <person name="Lloyd C.R."/>
            <person name="Lloyd D.M."/>
            <person name="Loveland J.E."/>
            <person name="Lovell J."/>
            <person name="Martin S."/>
            <person name="Mashreghi-Mohammadi M."/>
            <person name="Maslen G.L."/>
            <person name="Matthews L."/>
            <person name="McCann O.T."/>
            <person name="McLaren S.J."/>
            <person name="McLay K."/>
            <person name="McMurray A."/>
            <person name="Moore M.J.F."/>
            <person name="Mullikin J.C."/>
            <person name="Niblett D."/>
            <person name="Nickerson T."/>
            <person name="Novik K.L."/>
            <person name="Oliver K."/>
            <person name="Overton-Larty E.K."/>
            <person name="Parker A."/>
            <person name="Patel R."/>
            <person name="Pearce A.V."/>
            <person name="Peck A.I."/>
            <person name="Phillimore B.J.C.T."/>
            <person name="Phillips S."/>
            <person name="Plumb R.W."/>
            <person name="Porter K.M."/>
            <person name="Ramsey Y."/>
            <person name="Ranby S.A."/>
            <person name="Rice C.M."/>
            <person name="Ross M.T."/>
            <person name="Searle S.M."/>
            <person name="Sehra H.K."/>
            <person name="Sheridan E."/>
            <person name="Skuce C.D."/>
            <person name="Smith S."/>
            <person name="Smith M."/>
            <person name="Spraggon L."/>
            <person name="Squares S.L."/>
            <person name="Steward C.A."/>
            <person name="Sycamore N."/>
            <person name="Tamlyn-Hall G."/>
            <person name="Tester J."/>
            <person name="Theaker A.J."/>
            <person name="Thomas D.W."/>
            <person name="Thorpe A."/>
            <person name="Tracey A."/>
            <person name="Tromans A."/>
            <person name="Tubby B."/>
            <person name="Wall M."/>
            <person name="Wallis J.M."/>
            <person name="West A.P."/>
            <person name="White S.S."/>
            <person name="Whitehead S.L."/>
            <person name="Whittaker H."/>
            <person name="Wild A."/>
            <person name="Willey D.J."/>
            <person name="Wilmer T.E."/>
            <person name="Wood J.M."/>
            <person name="Wray P.W."/>
            <person name="Wyatt J.C."/>
            <person name="Young L."/>
            <person name="Younger R.M."/>
            <person name="Bentley D.R."/>
            <person name="Coulson A."/>
            <person name="Durbin R.M."/>
            <person name="Hubbard T."/>
            <person name="Sulston J.E."/>
            <person name="Dunham I."/>
            <person name="Rogers J."/>
            <person name="Beck S."/>
        </authorList>
    </citation>
    <scope>NUCLEOTIDE SEQUENCE [LARGE SCALE GENOMIC DNA]</scope>
</reference>
<reference key="2">
    <citation type="journal article" date="2018" name="Cell Death Dis.">
        <title>Transmembrane protein 170B is a novel breast tumorigenesis suppressor gene that inhibits the Wnt/beta-catenin pathway.</title>
        <authorList>
            <person name="Li M."/>
            <person name="Han Y."/>
            <person name="Zhou H."/>
            <person name="Li X."/>
            <person name="Lin C."/>
            <person name="Zhang E."/>
            <person name="Chi X."/>
            <person name="Hu J."/>
            <person name="Xu H."/>
        </authorList>
    </citation>
    <scope>FUNCTION</scope>
    <scope>SUBCELLULAR LOCATION</scope>
    <scope>TISSUE SPECIFICITY</scope>
    <scope>INTERACTION WITH CTNNB1</scope>
</reference>